<evidence type="ECO:0000255" key="1">
    <source>
        <dbReference type="HAMAP-Rule" id="MF_01309"/>
    </source>
</evidence>
<evidence type="ECO:0000305" key="2"/>
<sequence length="219" mass="24294">MGQKVNPIGLRVGVIRDWESRWFAEKDYATLLHEDIKIREYINVRLKDSAVAKVEIERAANRVNVTIHTAKPGMVIGKGGTEVEALRKALNQLTGKRVHINILEVKRADLNAKLVGENIARQLENRVSFRRAQKQVIQRAMRAGAKGIKTQVSGRLGGADIARAESYSEGTVPLHTLRADIDYAAVEADTTYGKLGVKVWIYRGEVLPTKKKASEEGGK</sequence>
<reference key="1">
    <citation type="journal article" date="2004" name="Nucleic Acids Res.">
        <title>The genome sequence of Bacillus cereus ATCC 10987 reveals metabolic adaptations and a large plasmid related to Bacillus anthracis pXO1.</title>
        <authorList>
            <person name="Rasko D.A."/>
            <person name="Ravel J."/>
            <person name="Oekstad O.A."/>
            <person name="Helgason E."/>
            <person name="Cer R.Z."/>
            <person name="Jiang L."/>
            <person name="Shores K.A."/>
            <person name="Fouts D.E."/>
            <person name="Tourasse N.J."/>
            <person name="Angiuoli S.V."/>
            <person name="Kolonay J.F."/>
            <person name="Nelson W.C."/>
            <person name="Kolstoe A.-B."/>
            <person name="Fraser C.M."/>
            <person name="Read T.D."/>
        </authorList>
    </citation>
    <scope>NUCLEOTIDE SEQUENCE [LARGE SCALE GENOMIC DNA]</scope>
    <source>
        <strain>ATCC 10987 / NRS 248</strain>
    </source>
</reference>
<organism>
    <name type="scientific">Bacillus cereus (strain ATCC 10987 / NRS 248)</name>
    <dbReference type="NCBI Taxonomy" id="222523"/>
    <lineage>
        <taxon>Bacteria</taxon>
        <taxon>Bacillati</taxon>
        <taxon>Bacillota</taxon>
        <taxon>Bacilli</taxon>
        <taxon>Bacillales</taxon>
        <taxon>Bacillaceae</taxon>
        <taxon>Bacillus</taxon>
        <taxon>Bacillus cereus group</taxon>
    </lineage>
</organism>
<proteinExistence type="inferred from homology"/>
<protein>
    <recommendedName>
        <fullName evidence="1">Small ribosomal subunit protein uS3</fullName>
    </recommendedName>
    <alternativeName>
        <fullName evidence="2">30S ribosomal protein S3</fullName>
    </alternativeName>
</protein>
<keyword id="KW-0687">Ribonucleoprotein</keyword>
<keyword id="KW-0689">Ribosomal protein</keyword>
<keyword id="KW-0694">RNA-binding</keyword>
<keyword id="KW-0699">rRNA-binding</keyword>
<accession>Q73F90</accession>
<comment type="function">
    <text evidence="1">Binds the lower part of the 30S subunit head. Binds mRNA in the 70S ribosome, positioning it for translation.</text>
</comment>
<comment type="subunit">
    <text evidence="1">Part of the 30S ribosomal subunit. Forms a tight complex with proteins S10 and S14.</text>
</comment>
<comment type="similarity">
    <text evidence="1">Belongs to the universal ribosomal protein uS3 family.</text>
</comment>
<feature type="chain" id="PRO_0000130065" description="Small ribosomal subunit protein uS3">
    <location>
        <begin position="1"/>
        <end position="219"/>
    </location>
</feature>
<feature type="domain" description="KH type-2" evidence="1">
    <location>
        <begin position="38"/>
        <end position="106"/>
    </location>
</feature>
<gene>
    <name evidence="1" type="primary">rpsC</name>
    <name type="ordered locus">BCE_0116</name>
</gene>
<name>RS3_BACC1</name>
<dbReference type="EMBL" id="AE017194">
    <property type="protein sequence ID" value="AAS39052.1"/>
    <property type="molecule type" value="Genomic_DNA"/>
</dbReference>
<dbReference type="SMR" id="Q73F90"/>
<dbReference type="KEGG" id="bca:BCE_0116"/>
<dbReference type="HOGENOM" id="CLU_058591_0_2_9"/>
<dbReference type="Proteomes" id="UP000002527">
    <property type="component" value="Chromosome"/>
</dbReference>
<dbReference type="GO" id="GO:0022627">
    <property type="term" value="C:cytosolic small ribosomal subunit"/>
    <property type="evidence" value="ECO:0007669"/>
    <property type="project" value="TreeGrafter"/>
</dbReference>
<dbReference type="GO" id="GO:0003729">
    <property type="term" value="F:mRNA binding"/>
    <property type="evidence" value="ECO:0007669"/>
    <property type="project" value="UniProtKB-UniRule"/>
</dbReference>
<dbReference type="GO" id="GO:0019843">
    <property type="term" value="F:rRNA binding"/>
    <property type="evidence" value="ECO:0007669"/>
    <property type="project" value="UniProtKB-UniRule"/>
</dbReference>
<dbReference type="GO" id="GO:0003735">
    <property type="term" value="F:structural constituent of ribosome"/>
    <property type="evidence" value="ECO:0007669"/>
    <property type="project" value="InterPro"/>
</dbReference>
<dbReference type="GO" id="GO:0006412">
    <property type="term" value="P:translation"/>
    <property type="evidence" value="ECO:0007669"/>
    <property type="project" value="UniProtKB-UniRule"/>
</dbReference>
<dbReference type="CDD" id="cd02412">
    <property type="entry name" value="KH-II_30S_S3"/>
    <property type="match status" value="1"/>
</dbReference>
<dbReference type="FunFam" id="3.30.1140.32:FF:000001">
    <property type="entry name" value="30S ribosomal protein S3"/>
    <property type="match status" value="1"/>
</dbReference>
<dbReference type="FunFam" id="3.30.300.20:FF:000001">
    <property type="entry name" value="30S ribosomal protein S3"/>
    <property type="match status" value="1"/>
</dbReference>
<dbReference type="Gene3D" id="3.30.300.20">
    <property type="match status" value="1"/>
</dbReference>
<dbReference type="Gene3D" id="3.30.1140.32">
    <property type="entry name" value="Ribosomal protein S3, C-terminal domain"/>
    <property type="match status" value="1"/>
</dbReference>
<dbReference type="HAMAP" id="MF_01309_B">
    <property type="entry name" value="Ribosomal_uS3_B"/>
    <property type="match status" value="1"/>
</dbReference>
<dbReference type="InterPro" id="IPR004087">
    <property type="entry name" value="KH_dom"/>
</dbReference>
<dbReference type="InterPro" id="IPR015946">
    <property type="entry name" value="KH_dom-like_a/b"/>
</dbReference>
<dbReference type="InterPro" id="IPR004044">
    <property type="entry name" value="KH_dom_type_2"/>
</dbReference>
<dbReference type="InterPro" id="IPR009019">
    <property type="entry name" value="KH_sf_prok-type"/>
</dbReference>
<dbReference type="InterPro" id="IPR036419">
    <property type="entry name" value="Ribosomal_S3_C_sf"/>
</dbReference>
<dbReference type="InterPro" id="IPR005704">
    <property type="entry name" value="Ribosomal_uS3_bac-typ"/>
</dbReference>
<dbReference type="InterPro" id="IPR001351">
    <property type="entry name" value="Ribosomal_uS3_C"/>
</dbReference>
<dbReference type="InterPro" id="IPR018280">
    <property type="entry name" value="Ribosomal_uS3_CS"/>
</dbReference>
<dbReference type="NCBIfam" id="TIGR01009">
    <property type="entry name" value="rpsC_bact"/>
    <property type="match status" value="1"/>
</dbReference>
<dbReference type="PANTHER" id="PTHR11760">
    <property type="entry name" value="30S/40S RIBOSOMAL PROTEIN S3"/>
    <property type="match status" value="1"/>
</dbReference>
<dbReference type="PANTHER" id="PTHR11760:SF19">
    <property type="entry name" value="SMALL RIBOSOMAL SUBUNIT PROTEIN US3C"/>
    <property type="match status" value="1"/>
</dbReference>
<dbReference type="Pfam" id="PF07650">
    <property type="entry name" value="KH_2"/>
    <property type="match status" value="1"/>
</dbReference>
<dbReference type="Pfam" id="PF00189">
    <property type="entry name" value="Ribosomal_S3_C"/>
    <property type="match status" value="1"/>
</dbReference>
<dbReference type="SMART" id="SM00322">
    <property type="entry name" value="KH"/>
    <property type="match status" value="1"/>
</dbReference>
<dbReference type="SUPFAM" id="SSF54814">
    <property type="entry name" value="Prokaryotic type KH domain (KH-domain type II)"/>
    <property type="match status" value="1"/>
</dbReference>
<dbReference type="SUPFAM" id="SSF54821">
    <property type="entry name" value="Ribosomal protein S3 C-terminal domain"/>
    <property type="match status" value="1"/>
</dbReference>
<dbReference type="PROSITE" id="PS50823">
    <property type="entry name" value="KH_TYPE_2"/>
    <property type="match status" value="1"/>
</dbReference>
<dbReference type="PROSITE" id="PS00548">
    <property type="entry name" value="RIBOSOMAL_S3"/>
    <property type="match status" value="1"/>
</dbReference>